<evidence type="ECO:0000255" key="1">
    <source>
        <dbReference type="HAMAP-Rule" id="MF_00085"/>
    </source>
</evidence>
<sequence>MKEQTEIGKLKDGRYMVVDDQPCKILGINTSKPGKHGAAKARIDVVGIFDGVKRSIVQPVSAKTYVPIVERKAAQVLSISGDMAQLMDLKEFTNFEIKITDDKKNDVEVGKEVTYIESMGMRKLD</sequence>
<proteinExistence type="inferred from homology"/>
<accession>B8GEC0</accession>
<protein>
    <recommendedName>
        <fullName evidence="1">Translation initiation factor 5A</fullName>
    </recommendedName>
    <alternativeName>
        <fullName evidence="1">Hypusine-containing protein</fullName>
    </alternativeName>
    <alternativeName>
        <fullName evidence="1">eIF-5A</fullName>
    </alternativeName>
</protein>
<name>IF5A_METPE</name>
<gene>
    <name type="primary">eIF5A</name>
    <name type="ordered locus">Mpal_2337</name>
</gene>
<organism>
    <name type="scientific">Methanosphaerula palustris (strain ATCC BAA-1556 / DSM 19958 / E1-9c)</name>
    <dbReference type="NCBI Taxonomy" id="521011"/>
    <lineage>
        <taxon>Archaea</taxon>
        <taxon>Methanobacteriati</taxon>
        <taxon>Methanobacteriota</taxon>
        <taxon>Stenosarchaea group</taxon>
        <taxon>Methanomicrobia</taxon>
        <taxon>Methanomicrobiales</taxon>
        <taxon>Methanoregulaceae</taxon>
        <taxon>Methanosphaerula</taxon>
    </lineage>
</organism>
<feature type="chain" id="PRO_1000118422" description="Translation initiation factor 5A">
    <location>
        <begin position="1"/>
        <end position="125"/>
    </location>
</feature>
<feature type="modified residue" description="Hypusine" evidence="1">
    <location>
        <position position="35"/>
    </location>
</feature>
<comment type="function">
    <text evidence="1">Functions by promoting the formation of the first peptide bond.</text>
</comment>
<comment type="subcellular location">
    <subcellularLocation>
        <location evidence="1">Cytoplasm</location>
    </subcellularLocation>
</comment>
<comment type="similarity">
    <text evidence="1">Belongs to the eIF-5A family.</text>
</comment>
<keyword id="KW-0963">Cytoplasm</keyword>
<keyword id="KW-0385">Hypusine</keyword>
<keyword id="KW-0396">Initiation factor</keyword>
<keyword id="KW-0648">Protein biosynthesis</keyword>
<keyword id="KW-1185">Reference proteome</keyword>
<dbReference type="EMBL" id="CP001338">
    <property type="protein sequence ID" value="ACL17621.1"/>
    <property type="molecule type" value="Genomic_DNA"/>
</dbReference>
<dbReference type="RefSeq" id="WP_012618940.1">
    <property type="nucleotide sequence ID" value="NC_011832.1"/>
</dbReference>
<dbReference type="SMR" id="B8GEC0"/>
<dbReference type="STRING" id="521011.Mpal_2337"/>
<dbReference type="GeneID" id="7272058"/>
<dbReference type="KEGG" id="mpl:Mpal_2337"/>
<dbReference type="eggNOG" id="arCOG04277">
    <property type="taxonomic scope" value="Archaea"/>
</dbReference>
<dbReference type="HOGENOM" id="CLU_102600_3_0_2"/>
<dbReference type="OrthoDB" id="23689at2157"/>
<dbReference type="Proteomes" id="UP000002457">
    <property type="component" value="Chromosome"/>
</dbReference>
<dbReference type="GO" id="GO:0005737">
    <property type="term" value="C:cytoplasm"/>
    <property type="evidence" value="ECO:0007669"/>
    <property type="project" value="UniProtKB-SubCell"/>
</dbReference>
<dbReference type="GO" id="GO:0043022">
    <property type="term" value="F:ribosome binding"/>
    <property type="evidence" value="ECO:0007669"/>
    <property type="project" value="InterPro"/>
</dbReference>
<dbReference type="GO" id="GO:0003723">
    <property type="term" value="F:RNA binding"/>
    <property type="evidence" value="ECO:0007669"/>
    <property type="project" value="InterPro"/>
</dbReference>
<dbReference type="GO" id="GO:0003746">
    <property type="term" value="F:translation elongation factor activity"/>
    <property type="evidence" value="ECO:0007669"/>
    <property type="project" value="InterPro"/>
</dbReference>
<dbReference type="GO" id="GO:0003743">
    <property type="term" value="F:translation initiation factor activity"/>
    <property type="evidence" value="ECO:0007669"/>
    <property type="project" value="UniProtKB-UniRule"/>
</dbReference>
<dbReference type="GO" id="GO:0045901">
    <property type="term" value="P:positive regulation of translational elongation"/>
    <property type="evidence" value="ECO:0007669"/>
    <property type="project" value="InterPro"/>
</dbReference>
<dbReference type="GO" id="GO:0045905">
    <property type="term" value="P:positive regulation of translational termination"/>
    <property type="evidence" value="ECO:0007669"/>
    <property type="project" value="InterPro"/>
</dbReference>
<dbReference type="CDD" id="cd04467">
    <property type="entry name" value="S1_aIF5A"/>
    <property type="match status" value="1"/>
</dbReference>
<dbReference type="Gene3D" id="2.30.30.30">
    <property type="match status" value="1"/>
</dbReference>
<dbReference type="Gene3D" id="2.40.50.140">
    <property type="entry name" value="Nucleic acid-binding proteins"/>
    <property type="match status" value="1"/>
</dbReference>
<dbReference type="HAMAP" id="MF_00085">
    <property type="entry name" value="eIF_5A"/>
    <property type="match status" value="1"/>
</dbReference>
<dbReference type="InterPro" id="IPR001884">
    <property type="entry name" value="IF5A-like"/>
</dbReference>
<dbReference type="InterPro" id="IPR048670">
    <property type="entry name" value="IF5A-like_N"/>
</dbReference>
<dbReference type="InterPro" id="IPR012340">
    <property type="entry name" value="NA-bd_OB-fold"/>
</dbReference>
<dbReference type="InterPro" id="IPR014722">
    <property type="entry name" value="Rib_uL2_dom2"/>
</dbReference>
<dbReference type="InterPro" id="IPR019769">
    <property type="entry name" value="Trans_elong_IF5A_hypusine_site"/>
</dbReference>
<dbReference type="InterPro" id="IPR022847">
    <property type="entry name" value="Transl_elong_IF5A_arc"/>
</dbReference>
<dbReference type="InterPro" id="IPR020189">
    <property type="entry name" value="Transl_elong_IF5A_C"/>
</dbReference>
<dbReference type="InterPro" id="IPR008991">
    <property type="entry name" value="Translation_prot_SH3-like_sf"/>
</dbReference>
<dbReference type="NCBIfam" id="TIGR00037">
    <property type="entry name" value="eIF_5A"/>
    <property type="match status" value="1"/>
</dbReference>
<dbReference type="NCBIfam" id="NF003076">
    <property type="entry name" value="PRK03999.1"/>
    <property type="match status" value="1"/>
</dbReference>
<dbReference type="PANTHER" id="PTHR11673">
    <property type="entry name" value="TRANSLATION INITIATION FACTOR 5A FAMILY MEMBER"/>
    <property type="match status" value="1"/>
</dbReference>
<dbReference type="Pfam" id="PF01287">
    <property type="entry name" value="eIF-5a"/>
    <property type="match status" value="1"/>
</dbReference>
<dbReference type="Pfam" id="PF21485">
    <property type="entry name" value="IF5A-like_N"/>
    <property type="match status" value="1"/>
</dbReference>
<dbReference type="PIRSF" id="PIRSF003025">
    <property type="entry name" value="eIF5A"/>
    <property type="match status" value="1"/>
</dbReference>
<dbReference type="SMART" id="SM01376">
    <property type="entry name" value="eIF-5a"/>
    <property type="match status" value="1"/>
</dbReference>
<dbReference type="SUPFAM" id="SSF50249">
    <property type="entry name" value="Nucleic acid-binding proteins"/>
    <property type="match status" value="1"/>
</dbReference>
<dbReference type="SUPFAM" id="SSF50104">
    <property type="entry name" value="Translation proteins SH3-like domain"/>
    <property type="match status" value="1"/>
</dbReference>
<dbReference type="PROSITE" id="PS00302">
    <property type="entry name" value="IF5A_HYPUSINE"/>
    <property type="match status" value="1"/>
</dbReference>
<reference key="1">
    <citation type="journal article" date="2015" name="Genome Announc.">
        <title>Complete Genome Sequence of Methanosphaerula palustris E1-9CT, a Hydrogenotrophic Methanogen Isolated from a Minerotrophic Fen Peatland.</title>
        <authorList>
            <person name="Cadillo-Quiroz H."/>
            <person name="Browne P."/>
            <person name="Kyrpides N."/>
            <person name="Woyke T."/>
            <person name="Goodwin L."/>
            <person name="Detter C."/>
            <person name="Yavitt J.B."/>
            <person name="Zinder S.H."/>
        </authorList>
    </citation>
    <scope>NUCLEOTIDE SEQUENCE [LARGE SCALE GENOMIC DNA]</scope>
    <source>
        <strain>ATCC BAA-1556 / DSM 19958 / E1-9c</strain>
    </source>
</reference>